<evidence type="ECO:0000255" key="1">
    <source>
        <dbReference type="HAMAP-Rule" id="MF_02068"/>
    </source>
</evidence>
<comment type="function">
    <text evidence="1">Catalyzes the transfer of the cytidylyl group of CTP to D-ribitol 5-phosphate.</text>
</comment>
<comment type="catalytic activity">
    <reaction evidence="1">
        <text>D-ribitol 5-phosphate + CTP + H(+) = CDP-L-ribitol + diphosphate</text>
        <dbReference type="Rhea" id="RHEA:12456"/>
        <dbReference type="ChEBI" id="CHEBI:15378"/>
        <dbReference type="ChEBI" id="CHEBI:33019"/>
        <dbReference type="ChEBI" id="CHEBI:37563"/>
        <dbReference type="ChEBI" id="CHEBI:57608"/>
        <dbReference type="ChEBI" id="CHEBI:57695"/>
        <dbReference type="EC" id="2.7.7.40"/>
    </reaction>
</comment>
<comment type="pathway">
    <text evidence="1">Cell wall biogenesis; poly(ribitol phosphate) teichoic acid biosynthesis.</text>
</comment>
<comment type="similarity">
    <text evidence="1">Belongs to the IspD/TarI cytidylyltransferase family. TarI subfamily.</text>
</comment>
<accession>Q88W46</accession>
<accession>F9UPF9</accession>
<organism>
    <name type="scientific">Lactiplantibacillus plantarum (strain ATCC BAA-793 / NCIMB 8826 / WCFS1)</name>
    <name type="common">Lactobacillus plantarum</name>
    <dbReference type="NCBI Taxonomy" id="220668"/>
    <lineage>
        <taxon>Bacteria</taxon>
        <taxon>Bacillati</taxon>
        <taxon>Bacillota</taxon>
        <taxon>Bacilli</taxon>
        <taxon>Lactobacillales</taxon>
        <taxon>Lactobacillaceae</taxon>
        <taxon>Lactiplantibacillus</taxon>
    </lineage>
</organism>
<dbReference type="EC" id="2.7.7.40" evidence="1"/>
<dbReference type="EMBL" id="AL935263">
    <property type="protein sequence ID" value="CCC79098.1"/>
    <property type="molecule type" value="Genomic_DNA"/>
</dbReference>
<dbReference type="RefSeq" id="WP_011101561.1">
    <property type="nucleotide sequence ID" value="NC_004567.2"/>
</dbReference>
<dbReference type="RefSeq" id="YP_004889612.1">
    <property type="nucleotide sequence ID" value="NC_004567.2"/>
</dbReference>
<dbReference type="SMR" id="Q88W46"/>
<dbReference type="STRING" id="220668.lp_1816"/>
<dbReference type="EnsemblBacteria" id="CCC79098">
    <property type="protein sequence ID" value="CCC79098"/>
    <property type="gene ID" value="lp_1816"/>
</dbReference>
<dbReference type="KEGG" id="lpl:lp_1816"/>
<dbReference type="PATRIC" id="fig|220668.9.peg.1534"/>
<dbReference type="eggNOG" id="COG1211">
    <property type="taxonomic scope" value="Bacteria"/>
</dbReference>
<dbReference type="HOGENOM" id="CLU_061281_2_3_9"/>
<dbReference type="OrthoDB" id="9806837at2"/>
<dbReference type="PhylomeDB" id="Q88W46"/>
<dbReference type="UniPathway" id="UPA00790"/>
<dbReference type="Proteomes" id="UP000000432">
    <property type="component" value="Chromosome"/>
</dbReference>
<dbReference type="GO" id="GO:0050518">
    <property type="term" value="F:2-C-methyl-D-erythritol 4-phosphate cytidylyltransferase activity"/>
    <property type="evidence" value="ECO:0007669"/>
    <property type="project" value="TreeGrafter"/>
</dbReference>
<dbReference type="GO" id="GO:0047349">
    <property type="term" value="F:D-ribitol-5-phosphate cytidylyltransferase activity"/>
    <property type="evidence" value="ECO:0007669"/>
    <property type="project" value="UniProtKB-UniRule"/>
</dbReference>
<dbReference type="GO" id="GO:0071555">
    <property type="term" value="P:cell wall organization"/>
    <property type="evidence" value="ECO:0007669"/>
    <property type="project" value="UniProtKB-KW"/>
</dbReference>
<dbReference type="GO" id="GO:0008299">
    <property type="term" value="P:isoprenoid biosynthetic process"/>
    <property type="evidence" value="ECO:0007669"/>
    <property type="project" value="InterPro"/>
</dbReference>
<dbReference type="GO" id="GO:1902012">
    <property type="term" value="P:poly(ribitol phosphate) teichoic acid biosynthetic process"/>
    <property type="evidence" value="ECO:0007669"/>
    <property type="project" value="UniProtKB-UniRule"/>
</dbReference>
<dbReference type="CDD" id="cd02516">
    <property type="entry name" value="CDP-ME_synthetase"/>
    <property type="match status" value="1"/>
</dbReference>
<dbReference type="FunFam" id="3.90.550.10:FF:000003">
    <property type="entry name" value="2-C-methyl-D-erythritol 4-phosphate cytidylyltransferase"/>
    <property type="match status" value="1"/>
</dbReference>
<dbReference type="Gene3D" id="3.90.550.10">
    <property type="entry name" value="Spore Coat Polysaccharide Biosynthesis Protein SpsA, Chain A"/>
    <property type="match status" value="1"/>
</dbReference>
<dbReference type="HAMAP" id="MF_02068">
    <property type="entry name" value="TarI"/>
    <property type="match status" value="1"/>
</dbReference>
<dbReference type="InterPro" id="IPR034683">
    <property type="entry name" value="IspD/TarI"/>
</dbReference>
<dbReference type="InterPro" id="IPR050088">
    <property type="entry name" value="IspD/TarI_cytidylyltransf_bact"/>
</dbReference>
<dbReference type="InterPro" id="IPR018294">
    <property type="entry name" value="ISPD_synthase_CS"/>
</dbReference>
<dbReference type="InterPro" id="IPR029044">
    <property type="entry name" value="Nucleotide-diphossugar_trans"/>
</dbReference>
<dbReference type="InterPro" id="IPR034709">
    <property type="entry name" value="TarI"/>
</dbReference>
<dbReference type="NCBIfam" id="NF001183">
    <property type="entry name" value="PRK00155.1-3"/>
    <property type="match status" value="1"/>
</dbReference>
<dbReference type="PANTHER" id="PTHR32125">
    <property type="entry name" value="2-C-METHYL-D-ERYTHRITOL 4-PHOSPHATE CYTIDYLYLTRANSFERASE, CHLOROPLASTIC"/>
    <property type="match status" value="1"/>
</dbReference>
<dbReference type="PANTHER" id="PTHR32125:SF8">
    <property type="entry name" value="RIBITOL-5-PHOSPHATE CYTIDYLYLTRANSFERASE"/>
    <property type="match status" value="1"/>
</dbReference>
<dbReference type="Pfam" id="PF01128">
    <property type="entry name" value="IspD"/>
    <property type="match status" value="1"/>
</dbReference>
<dbReference type="SUPFAM" id="SSF53448">
    <property type="entry name" value="Nucleotide-diphospho-sugar transferases"/>
    <property type="match status" value="1"/>
</dbReference>
<dbReference type="PROSITE" id="PS01295">
    <property type="entry name" value="ISPD"/>
    <property type="match status" value="1"/>
</dbReference>
<gene>
    <name evidence="1" type="primary">tarI</name>
    <name type="ordered locus">lp_1816</name>
</gene>
<reference key="1">
    <citation type="journal article" date="2003" name="Proc. Natl. Acad. Sci. U.S.A.">
        <title>Complete genome sequence of Lactobacillus plantarum WCFS1.</title>
        <authorList>
            <person name="Kleerebezem M."/>
            <person name="Boekhorst J."/>
            <person name="van Kranenburg R."/>
            <person name="Molenaar D."/>
            <person name="Kuipers O.P."/>
            <person name="Leer R."/>
            <person name="Tarchini R."/>
            <person name="Peters S.A."/>
            <person name="Sandbrink H.M."/>
            <person name="Fiers M.W.E.J."/>
            <person name="Stiekema W."/>
            <person name="Klein Lankhorst R.M."/>
            <person name="Bron P.A."/>
            <person name="Hoffer S.M."/>
            <person name="Nierop Groot M.N."/>
            <person name="Kerkhoven R."/>
            <person name="De Vries M."/>
            <person name="Ursing B."/>
            <person name="De Vos W.M."/>
            <person name="Siezen R.J."/>
        </authorList>
    </citation>
    <scope>NUCLEOTIDE SEQUENCE [LARGE SCALE GENOMIC DNA]</scope>
    <source>
        <strain>ATCC BAA-793 / NCIMB 8826 / WCFS1</strain>
    </source>
</reference>
<reference key="2">
    <citation type="journal article" date="2012" name="J. Bacteriol.">
        <title>Complete resequencing and reannotation of the Lactobacillus plantarum WCFS1 genome.</title>
        <authorList>
            <person name="Siezen R.J."/>
            <person name="Francke C."/>
            <person name="Renckens B."/>
            <person name="Boekhorst J."/>
            <person name="Wels M."/>
            <person name="Kleerebezem M."/>
            <person name="van Hijum S.A."/>
        </authorList>
    </citation>
    <scope>NUCLEOTIDE SEQUENCE [LARGE SCALE GENOMIC DNA]</scope>
    <scope>GENOME REANNOTATION</scope>
    <source>
        <strain>ATCC BAA-793 / NCIMB 8826 / WCFS1</strain>
    </source>
</reference>
<sequence length="233" mass="25901">MIYAQILAGGKGTRMGNVPMPKQFLLLADKPILIHTIEKFTLESRFDAILVVCPADWVSHTEDIIKKYITDERVHVVVGGADRNETLMSGINYIQDHYGIQDDDVVVTHDAVRPFITQRIINDNIVAVLENKAVDTVVPAIDTIVRGANDQVTDIPVRSEMYQGQTPQSFHIKILIDSYNALSSEQKASLSDSCKICSLAGQKVSLVRGENYNFKITTPFDLRVASALVEKRS</sequence>
<proteinExistence type="inferred from homology"/>
<name>TARI_LACPL</name>
<keyword id="KW-0961">Cell wall biogenesis/degradation</keyword>
<keyword id="KW-0548">Nucleotidyltransferase</keyword>
<keyword id="KW-1185">Reference proteome</keyword>
<keyword id="KW-0777">Teichoic acid biosynthesis</keyword>
<keyword id="KW-0808">Transferase</keyword>
<feature type="chain" id="PRO_0000075580" description="Ribitol-5-phosphate cytidylyltransferase">
    <location>
        <begin position="1"/>
        <end position="233"/>
    </location>
</feature>
<feature type="binding site" evidence="1">
    <location>
        <begin position="7"/>
        <end position="10"/>
    </location>
    <ligand>
        <name>CTP</name>
        <dbReference type="ChEBI" id="CHEBI:37563"/>
    </ligand>
</feature>
<feature type="binding site" evidence="1">
    <location>
        <begin position="80"/>
        <end position="86"/>
    </location>
    <ligand>
        <name>CTP</name>
        <dbReference type="ChEBI" id="CHEBI:37563"/>
    </ligand>
</feature>
<feature type="site" description="Transition state stabilizer" evidence="1">
    <location>
        <position position="14"/>
    </location>
</feature>
<feature type="site" description="Transition state stabilizer" evidence="1">
    <location>
        <position position="22"/>
    </location>
</feature>
<feature type="site" description="Positions ribitol 5-phosphate for the nucleophilic attack" evidence="1">
    <location>
        <position position="158"/>
    </location>
</feature>
<feature type="site" description="Positions ribitol 5-phosphate for the nucleophilic attack" evidence="1">
    <location>
        <position position="215"/>
    </location>
</feature>
<protein>
    <recommendedName>
        <fullName evidence="1">Ribitol-5-phosphate cytidylyltransferase</fullName>
        <ecNumber evidence="1">2.7.7.40</ecNumber>
    </recommendedName>
</protein>